<sequence>MLNLNLANLQFMAHKKGGGSTSNGRDSQAKRLGAKAADGQTVSGGSILYRQRGTKIYPGANVGRGGDDTLYAKVEGVVRFERKGRDKKQVSVYPIAK</sequence>
<keyword id="KW-0687">Ribonucleoprotein</keyword>
<keyword id="KW-0689">Ribosomal protein</keyword>
<proteinExistence type="inferred from homology"/>
<protein>
    <recommendedName>
        <fullName evidence="2">Large ribosomal subunit protein bL27</fullName>
    </recommendedName>
    <alternativeName>
        <fullName evidence="4">50S ribosomal protein L27</fullName>
    </alternativeName>
</protein>
<gene>
    <name evidence="2" type="primary">rpmA</name>
    <name type="ordered locus">SSU98_0781</name>
</gene>
<dbReference type="EMBL" id="CP000408">
    <property type="protein sequence ID" value="ABP91939.1"/>
    <property type="molecule type" value="Genomic_DNA"/>
</dbReference>
<dbReference type="SMR" id="A4W0Q0"/>
<dbReference type="KEGG" id="ssv:SSU98_0781"/>
<dbReference type="HOGENOM" id="CLU_095424_4_0_9"/>
<dbReference type="GO" id="GO:0022625">
    <property type="term" value="C:cytosolic large ribosomal subunit"/>
    <property type="evidence" value="ECO:0007669"/>
    <property type="project" value="TreeGrafter"/>
</dbReference>
<dbReference type="GO" id="GO:0003735">
    <property type="term" value="F:structural constituent of ribosome"/>
    <property type="evidence" value="ECO:0007669"/>
    <property type="project" value="InterPro"/>
</dbReference>
<dbReference type="GO" id="GO:0006412">
    <property type="term" value="P:translation"/>
    <property type="evidence" value="ECO:0007669"/>
    <property type="project" value="UniProtKB-UniRule"/>
</dbReference>
<dbReference type="FunFam" id="2.40.50.100:FF:000004">
    <property type="entry name" value="50S ribosomal protein L27"/>
    <property type="match status" value="1"/>
</dbReference>
<dbReference type="Gene3D" id="2.40.50.100">
    <property type="match status" value="1"/>
</dbReference>
<dbReference type="HAMAP" id="MF_00539">
    <property type="entry name" value="Ribosomal_bL27"/>
    <property type="match status" value="1"/>
</dbReference>
<dbReference type="InterPro" id="IPR001684">
    <property type="entry name" value="Ribosomal_bL27"/>
</dbReference>
<dbReference type="InterPro" id="IPR018261">
    <property type="entry name" value="Ribosomal_bL27_CS"/>
</dbReference>
<dbReference type="NCBIfam" id="TIGR00062">
    <property type="entry name" value="L27"/>
    <property type="match status" value="1"/>
</dbReference>
<dbReference type="PANTHER" id="PTHR15893:SF0">
    <property type="entry name" value="LARGE RIBOSOMAL SUBUNIT PROTEIN BL27M"/>
    <property type="match status" value="1"/>
</dbReference>
<dbReference type="PANTHER" id="PTHR15893">
    <property type="entry name" value="RIBOSOMAL PROTEIN L27"/>
    <property type="match status" value="1"/>
</dbReference>
<dbReference type="Pfam" id="PF01016">
    <property type="entry name" value="Ribosomal_L27"/>
    <property type="match status" value="1"/>
</dbReference>
<dbReference type="PRINTS" id="PR00063">
    <property type="entry name" value="RIBOSOMALL27"/>
</dbReference>
<dbReference type="SUPFAM" id="SSF110324">
    <property type="entry name" value="Ribosomal L27 protein-like"/>
    <property type="match status" value="1"/>
</dbReference>
<dbReference type="PROSITE" id="PS00831">
    <property type="entry name" value="RIBOSOMAL_L27"/>
    <property type="match status" value="1"/>
</dbReference>
<evidence type="ECO:0000250" key="1">
    <source>
        <dbReference type="UniProtKB" id="Q2FXT0"/>
    </source>
</evidence>
<evidence type="ECO:0000255" key="2">
    <source>
        <dbReference type="HAMAP-Rule" id="MF_00539"/>
    </source>
</evidence>
<evidence type="ECO:0000256" key="3">
    <source>
        <dbReference type="SAM" id="MobiDB-lite"/>
    </source>
</evidence>
<evidence type="ECO:0000305" key="4"/>
<accession>A4W0Q0</accession>
<comment type="PTM">
    <text evidence="1">The N-terminus is cleaved by ribosomal processing cysteine protease Prp.</text>
</comment>
<comment type="similarity">
    <text evidence="2">Belongs to the bacterial ribosomal protein bL27 family.</text>
</comment>
<name>RL27_STRS2</name>
<organism>
    <name type="scientific">Streptococcus suis (strain 98HAH33)</name>
    <dbReference type="NCBI Taxonomy" id="391296"/>
    <lineage>
        <taxon>Bacteria</taxon>
        <taxon>Bacillati</taxon>
        <taxon>Bacillota</taxon>
        <taxon>Bacilli</taxon>
        <taxon>Lactobacillales</taxon>
        <taxon>Streptococcaceae</taxon>
        <taxon>Streptococcus</taxon>
    </lineage>
</organism>
<reference key="1">
    <citation type="journal article" date="2007" name="PLoS ONE">
        <title>A glimpse of streptococcal toxic shock syndrome from comparative genomics of S. suis 2 Chinese isolates.</title>
        <authorList>
            <person name="Chen C."/>
            <person name="Tang J."/>
            <person name="Dong W."/>
            <person name="Wang C."/>
            <person name="Feng Y."/>
            <person name="Wang J."/>
            <person name="Zheng F."/>
            <person name="Pan X."/>
            <person name="Liu D."/>
            <person name="Li M."/>
            <person name="Song Y."/>
            <person name="Zhu X."/>
            <person name="Sun H."/>
            <person name="Feng T."/>
            <person name="Guo Z."/>
            <person name="Ju A."/>
            <person name="Ge J."/>
            <person name="Dong Y."/>
            <person name="Sun W."/>
            <person name="Jiang Y."/>
            <person name="Wang J."/>
            <person name="Yan J."/>
            <person name="Yang H."/>
            <person name="Wang X."/>
            <person name="Gao G.F."/>
            <person name="Yang R."/>
            <person name="Wang J."/>
            <person name="Yu J."/>
        </authorList>
    </citation>
    <scope>NUCLEOTIDE SEQUENCE [LARGE SCALE GENOMIC DNA]</scope>
    <source>
        <strain>98HAH33</strain>
    </source>
</reference>
<feature type="propeptide" id="PRO_0000459968" evidence="1">
    <location>
        <begin position="1"/>
        <end position="12"/>
    </location>
</feature>
<feature type="chain" id="PRO_1000017623" description="Large ribosomal subunit protein bL27">
    <location>
        <begin position="13"/>
        <end position="97"/>
    </location>
</feature>
<feature type="region of interest" description="Disordered" evidence="3">
    <location>
        <begin position="15"/>
        <end position="37"/>
    </location>
</feature>